<evidence type="ECO:0000250" key="1"/>
<evidence type="ECO:0000255" key="2">
    <source>
        <dbReference type="HAMAP-Rule" id="MF_00118"/>
    </source>
</evidence>
<sequence length="397" mass="43600">MAKEKFERTKPHVNIGTIGHIDHGKTTLTAAITKHAALRGFGKFVAFDEIDKAPEERERGITISTAHVEYETAKRHYAHVDCPGHADYIKNMITGAAQMDGAILVVSADDGPMPQTREHILLARQVGVPSIVVFLNKCDMVDDEELIELVEMELQELLTKYEFPGDDTPIVRGSALKALEADTSDDPAAEPILKLLDVLDEYVKEPVRDTDKDFLMPIEDVFSISGRGTVVTGRIDRGIIKTGEEVELVGIRDTTKTICTGVEMFRKLLDEGRAGDNVGLLLRGTKRDAVERGQVVAKPGTITPHTKFKAEIYCLSKEEGGRHTPFFSGYRPQFFFRTTDVTGVLSLPEGVEMIMPGDNAAITAELIAPIAMEKELRFAIREGGRTVGAGVIGEIIE</sequence>
<comment type="function">
    <text evidence="2">GTP hydrolase that promotes the GTP-dependent binding of aminoacyl-tRNA to the A-site of ribosomes during protein biosynthesis.</text>
</comment>
<comment type="catalytic activity">
    <reaction evidence="2">
        <text>GTP + H2O = GDP + phosphate + H(+)</text>
        <dbReference type="Rhea" id="RHEA:19669"/>
        <dbReference type="ChEBI" id="CHEBI:15377"/>
        <dbReference type="ChEBI" id="CHEBI:15378"/>
        <dbReference type="ChEBI" id="CHEBI:37565"/>
        <dbReference type="ChEBI" id="CHEBI:43474"/>
        <dbReference type="ChEBI" id="CHEBI:58189"/>
        <dbReference type="EC" id="3.6.5.3"/>
    </reaction>
    <physiologicalReaction direction="left-to-right" evidence="2">
        <dbReference type="Rhea" id="RHEA:19670"/>
    </physiologicalReaction>
</comment>
<comment type="subunit">
    <text evidence="2">Monomer.</text>
</comment>
<comment type="subcellular location">
    <subcellularLocation>
        <location evidence="2">Cytoplasm</location>
    </subcellularLocation>
</comment>
<comment type="similarity">
    <text evidence="2">Belongs to the TRAFAC class translation factor GTPase superfamily. Classic translation factor GTPase family. EF-Tu/EF-1A subfamily.</text>
</comment>
<name>EFTU_DESAH</name>
<keyword id="KW-0963">Cytoplasm</keyword>
<keyword id="KW-0251">Elongation factor</keyword>
<keyword id="KW-0342">GTP-binding</keyword>
<keyword id="KW-0378">Hydrolase</keyword>
<keyword id="KW-0460">Magnesium</keyword>
<keyword id="KW-0479">Metal-binding</keyword>
<keyword id="KW-0547">Nucleotide-binding</keyword>
<keyword id="KW-0648">Protein biosynthesis</keyword>
<keyword id="KW-1185">Reference proteome</keyword>
<feature type="chain" id="PRO_1000203007" description="Elongation factor Tu">
    <location>
        <begin position="1"/>
        <end position="397"/>
    </location>
</feature>
<feature type="domain" description="tr-type G">
    <location>
        <begin position="10"/>
        <end position="207"/>
    </location>
</feature>
<feature type="region of interest" description="G1" evidence="1">
    <location>
        <begin position="19"/>
        <end position="26"/>
    </location>
</feature>
<feature type="region of interest" description="G2" evidence="1">
    <location>
        <begin position="60"/>
        <end position="64"/>
    </location>
</feature>
<feature type="region of interest" description="G3" evidence="1">
    <location>
        <begin position="81"/>
        <end position="84"/>
    </location>
</feature>
<feature type="region of interest" description="G4" evidence="1">
    <location>
        <begin position="136"/>
        <end position="139"/>
    </location>
</feature>
<feature type="region of interest" description="G5" evidence="1">
    <location>
        <begin position="174"/>
        <end position="176"/>
    </location>
</feature>
<feature type="binding site" evidence="2">
    <location>
        <begin position="19"/>
        <end position="26"/>
    </location>
    <ligand>
        <name>GTP</name>
        <dbReference type="ChEBI" id="CHEBI:37565"/>
    </ligand>
</feature>
<feature type="binding site" evidence="2">
    <location>
        <position position="26"/>
    </location>
    <ligand>
        <name>Mg(2+)</name>
        <dbReference type="ChEBI" id="CHEBI:18420"/>
    </ligand>
</feature>
<feature type="binding site" evidence="2">
    <location>
        <begin position="81"/>
        <end position="85"/>
    </location>
    <ligand>
        <name>GTP</name>
        <dbReference type="ChEBI" id="CHEBI:37565"/>
    </ligand>
</feature>
<feature type="binding site" evidence="2">
    <location>
        <begin position="136"/>
        <end position="139"/>
    </location>
    <ligand>
        <name>GTP</name>
        <dbReference type="ChEBI" id="CHEBI:37565"/>
    </ligand>
</feature>
<proteinExistence type="inferred from homology"/>
<protein>
    <recommendedName>
        <fullName evidence="2">Elongation factor Tu</fullName>
        <shortName evidence="2">EF-Tu</shortName>
        <ecNumber evidence="2">3.6.5.3</ecNumber>
    </recommendedName>
</protein>
<accession>C0Q9Y7</accession>
<dbReference type="EC" id="3.6.5.3" evidence="2"/>
<dbReference type="EMBL" id="CP001087">
    <property type="protein sequence ID" value="ACN16705.1"/>
    <property type="molecule type" value="Genomic_DNA"/>
</dbReference>
<dbReference type="RefSeq" id="WP_015905455.1">
    <property type="nucleotide sequence ID" value="NC_012108.1"/>
</dbReference>
<dbReference type="SMR" id="C0Q9Y7"/>
<dbReference type="STRING" id="177437.HRM2_36410"/>
<dbReference type="KEGG" id="dat:HRM2_36410"/>
<dbReference type="eggNOG" id="COG0050">
    <property type="taxonomic scope" value="Bacteria"/>
</dbReference>
<dbReference type="HOGENOM" id="CLU_007265_0_1_7"/>
<dbReference type="OrthoDB" id="9803139at2"/>
<dbReference type="Proteomes" id="UP000000442">
    <property type="component" value="Chromosome"/>
</dbReference>
<dbReference type="GO" id="GO:0005737">
    <property type="term" value="C:cytoplasm"/>
    <property type="evidence" value="ECO:0007669"/>
    <property type="project" value="UniProtKB-SubCell"/>
</dbReference>
<dbReference type="GO" id="GO:0005525">
    <property type="term" value="F:GTP binding"/>
    <property type="evidence" value="ECO:0007669"/>
    <property type="project" value="UniProtKB-UniRule"/>
</dbReference>
<dbReference type="GO" id="GO:0003924">
    <property type="term" value="F:GTPase activity"/>
    <property type="evidence" value="ECO:0007669"/>
    <property type="project" value="InterPro"/>
</dbReference>
<dbReference type="GO" id="GO:0003746">
    <property type="term" value="F:translation elongation factor activity"/>
    <property type="evidence" value="ECO:0007669"/>
    <property type="project" value="UniProtKB-UniRule"/>
</dbReference>
<dbReference type="CDD" id="cd01884">
    <property type="entry name" value="EF_Tu"/>
    <property type="match status" value="1"/>
</dbReference>
<dbReference type="CDD" id="cd03697">
    <property type="entry name" value="EFTU_II"/>
    <property type="match status" value="1"/>
</dbReference>
<dbReference type="CDD" id="cd03707">
    <property type="entry name" value="EFTU_III"/>
    <property type="match status" value="1"/>
</dbReference>
<dbReference type="FunFam" id="2.40.30.10:FF:000001">
    <property type="entry name" value="Elongation factor Tu"/>
    <property type="match status" value="1"/>
</dbReference>
<dbReference type="FunFam" id="3.40.50.300:FF:000003">
    <property type="entry name" value="Elongation factor Tu"/>
    <property type="match status" value="1"/>
</dbReference>
<dbReference type="Gene3D" id="3.40.50.300">
    <property type="entry name" value="P-loop containing nucleotide triphosphate hydrolases"/>
    <property type="match status" value="1"/>
</dbReference>
<dbReference type="Gene3D" id="2.40.30.10">
    <property type="entry name" value="Translation factors"/>
    <property type="match status" value="2"/>
</dbReference>
<dbReference type="HAMAP" id="MF_00118_B">
    <property type="entry name" value="EF_Tu_B"/>
    <property type="match status" value="1"/>
</dbReference>
<dbReference type="InterPro" id="IPR041709">
    <property type="entry name" value="EF-Tu_GTP-bd"/>
</dbReference>
<dbReference type="InterPro" id="IPR050055">
    <property type="entry name" value="EF-Tu_GTPase"/>
</dbReference>
<dbReference type="InterPro" id="IPR004161">
    <property type="entry name" value="EFTu-like_2"/>
</dbReference>
<dbReference type="InterPro" id="IPR033720">
    <property type="entry name" value="EFTU_2"/>
</dbReference>
<dbReference type="InterPro" id="IPR031157">
    <property type="entry name" value="G_TR_CS"/>
</dbReference>
<dbReference type="InterPro" id="IPR027417">
    <property type="entry name" value="P-loop_NTPase"/>
</dbReference>
<dbReference type="InterPro" id="IPR005225">
    <property type="entry name" value="Small_GTP-bd"/>
</dbReference>
<dbReference type="InterPro" id="IPR000795">
    <property type="entry name" value="T_Tr_GTP-bd_dom"/>
</dbReference>
<dbReference type="InterPro" id="IPR009000">
    <property type="entry name" value="Transl_B-barrel_sf"/>
</dbReference>
<dbReference type="InterPro" id="IPR009001">
    <property type="entry name" value="Transl_elong_EF1A/Init_IF2_C"/>
</dbReference>
<dbReference type="InterPro" id="IPR004541">
    <property type="entry name" value="Transl_elong_EFTu/EF1A_bac/org"/>
</dbReference>
<dbReference type="InterPro" id="IPR004160">
    <property type="entry name" value="Transl_elong_EFTu/EF1A_C"/>
</dbReference>
<dbReference type="NCBIfam" id="TIGR00485">
    <property type="entry name" value="EF-Tu"/>
    <property type="match status" value="1"/>
</dbReference>
<dbReference type="NCBIfam" id="NF000766">
    <property type="entry name" value="PRK00049.1"/>
    <property type="match status" value="1"/>
</dbReference>
<dbReference type="NCBIfam" id="NF009372">
    <property type="entry name" value="PRK12735.1"/>
    <property type="match status" value="1"/>
</dbReference>
<dbReference type="NCBIfam" id="NF009373">
    <property type="entry name" value="PRK12736.1"/>
    <property type="match status" value="1"/>
</dbReference>
<dbReference type="NCBIfam" id="TIGR00231">
    <property type="entry name" value="small_GTP"/>
    <property type="match status" value="1"/>
</dbReference>
<dbReference type="PANTHER" id="PTHR43721:SF22">
    <property type="entry name" value="ELONGATION FACTOR TU, MITOCHONDRIAL"/>
    <property type="match status" value="1"/>
</dbReference>
<dbReference type="PANTHER" id="PTHR43721">
    <property type="entry name" value="ELONGATION FACTOR TU-RELATED"/>
    <property type="match status" value="1"/>
</dbReference>
<dbReference type="Pfam" id="PF00009">
    <property type="entry name" value="GTP_EFTU"/>
    <property type="match status" value="1"/>
</dbReference>
<dbReference type="Pfam" id="PF03144">
    <property type="entry name" value="GTP_EFTU_D2"/>
    <property type="match status" value="1"/>
</dbReference>
<dbReference type="Pfam" id="PF03143">
    <property type="entry name" value="GTP_EFTU_D3"/>
    <property type="match status" value="1"/>
</dbReference>
<dbReference type="PRINTS" id="PR00315">
    <property type="entry name" value="ELONGATNFCT"/>
</dbReference>
<dbReference type="SUPFAM" id="SSF50465">
    <property type="entry name" value="EF-Tu/eEF-1alpha/eIF2-gamma C-terminal domain"/>
    <property type="match status" value="1"/>
</dbReference>
<dbReference type="SUPFAM" id="SSF52540">
    <property type="entry name" value="P-loop containing nucleoside triphosphate hydrolases"/>
    <property type="match status" value="1"/>
</dbReference>
<dbReference type="SUPFAM" id="SSF50447">
    <property type="entry name" value="Translation proteins"/>
    <property type="match status" value="1"/>
</dbReference>
<dbReference type="PROSITE" id="PS00301">
    <property type="entry name" value="G_TR_1"/>
    <property type="match status" value="1"/>
</dbReference>
<dbReference type="PROSITE" id="PS51722">
    <property type="entry name" value="G_TR_2"/>
    <property type="match status" value="1"/>
</dbReference>
<organism>
    <name type="scientific">Desulforapulum autotrophicum (strain ATCC 43914 / DSM 3382 / VKM B-1955 / HRM2)</name>
    <name type="common">Desulfobacterium autotrophicum</name>
    <dbReference type="NCBI Taxonomy" id="177437"/>
    <lineage>
        <taxon>Bacteria</taxon>
        <taxon>Pseudomonadati</taxon>
        <taxon>Thermodesulfobacteriota</taxon>
        <taxon>Desulfobacteria</taxon>
        <taxon>Desulfobacterales</taxon>
        <taxon>Desulfobacteraceae</taxon>
        <taxon>Desulforapulum</taxon>
    </lineage>
</organism>
<reference key="1">
    <citation type="journal article" date="2009" name="Environ. Microbiol.">
        <title>Genome sequence of Desulfobacterium autotrophicum HRM2, a marine sulfate reducer oxidizing organic carbon completely to carbon dioxide.</title>
        <authorList>
            <person name="Strittmatter A.W."/>
            <person name="Liesegang H."/>
            <person name="Rabus R."/>
            <person name="Decker I."/>
            <person name="Amann J."/>
            <person name="Andres S."/>
            <person name="Henne A."/>
            <person name="Fricke W.F."/>
            <person name="Martinez-Arias R."/>
            <person name="Bartels D."/>
            <person name="Goesmann A."/>
            <person name="Krause L."/>
            <person name="Puehler A."/>
            <person name="Klenk H.P."/>
            <person name="Richter M."/>
            <person name="Schuler M."/>
            <person name="Gloeckner F.O."/>
            <person name="Meyerdierks A."/>
            <person name="Gottschalk G."/>
            <person name="Amann R."/>
        </authorList>
    </citation>
    <scope>NUCLEOTIDE SEQUENCE [LARGE SCALE GENOMIC DNA]</scope>
    <source>
        <strain>ATCC 43914 / DSM 3382 / VKM B-1955 / HRM2</strain>
    </source>
</reference>
<gene>
    <name evidence="2" type="primary">tuf</name>
    <name type="ordered locus">HRM2_36410</name>
</gene>